<reference key="1">
    <citation type="journal article" date="2001" name="Genome Res.">
        <title>Towards a catalog of human genes and proteins: sequencing and analysis of 500 novel complete protein coding human cDNAs.</title>
        <authorList>
            <person name="Wiemann S."/>
            <person name="Weil B."/>
            <person name="Wellenreuther R."/>
            <person name="Gassenhuber J."/>
            <person name="Glassl S."/>
            <person name="Ansorge W."/>
            <person name="Boecher M."/>
            <person name="Bloecker H."/>
            <person name="Bauersachs S."/>
            <person name="Blum H."/>
            <person name="Lauber J."/>
            <person name="Duesterhoeft A."/>
            <person name="Beyer A."/>
            <person name="Koehrer K."/>
            <person name="Strack N."/>
            <person name="Mewes H.-W."/>
            <person name="Ottenwaelder B."/>
            <person name="Obermaier B."/>
            <person name="Tampe J."/>
            <person name="Heubner D."/>
            <person name="Wambutt R."/>
            <person name="Korn B."/>
            <person name="Klein M."/>
            <person name="Poustka A."/>
        </authorList>
    </citation>
    <scope>NUCLEOTIDE SEQUENCE [LARGE SCALE MRNA] (ISOFORM 1)</scope>
    <scope>VARIANT ASN-266</scope>
    <source>
        <tissue>Brain</tissue>
    </source>
</reference>
<reference key="2">
    <citation type="journal article" date="2004" name="Nat. Genet.">
        <title>Complete sequencing and characterization of 21,243 full-length human cDNAs.</title>
        <authorList>
            <person name="Ota T."/>
            <person name="Suzuki Y."/>
            <person name="Nishikawa T."/>
            <person name="Otsuki T."/>
            <person name="Sugiyama T."/>
            <person name="Irie R."/>
            <person name="Wakamatsu A."/>
            <person name="Hayashi K."/>
            <person name="Sato H."/>
            <person name="Nagai K."/>
            <person name="Kimura K."/>
            <person name="Makita H."/>
            <person name="Sekine M."/>
            <person name="Obayashi M."/>
            <person name="Nishi T."/>
            <person name="Shibahara T."/>
            <person name="Tanaka T."/>
            <person name="Ishii S."/>
            <person name="Yamamoto J."/>
            <person name="Saito K."/>
            <person name="Kawai Y."/>
            <person name="Isono Y."/>
            <person name="Nakamura Y."/>
            <person name="Nagahari K."/>
            <person name="Murakami K."/>
            <person name="Yasuda T."/>
            <person name="Iwayanagi T."/>
            <person name="Wagatsuma M."/>
            <person name="Shiratori A."/>
            <person name="Sudo H."/>
            <person name="Hosoiri T."/>
            <person name="Kaku Y."/>
            <person name="Kodaira H."/>
            <person name="Kondo H."/>
            <person name="Sugawara M."/>
            <person name="Takahashi M."/>
            <person name="Kanda K."/>
            <person name="Yokoi T."/>
            <person name="Furuya T."/>
            <person name="Kikkawa E."/>
            <person name="Omura Y."/>
            <person name="Abe K."/>
            <person name="Kamihara K."/>
            <person name="Katsuta N."/>
            <person name="Sato K."/>
            <person name="Tanikawa M."/>
            <person name="Yamazaki M."/>
            <person name="Ninomiya K."/>
            <person name="Ishibashi T."/>
            <person name="Yamashita H."/>
            <person name="Murakawa K."/>
            <person name="Fujimori K."/>
            <person name="Tanai H."/>
            <person name="Kimata M."/>
            <person name="Watanabe M."/>
            <person name="Hiraoka S."/>
            <person name="Chiba Y."/>
            <person name="Ishida S."/>
            <person name="Ono Y."/>
            <person name="Takiguchi S."/>
            <person name="Watanabe S."/>
            <person name="Yosida M."/>
            <person name="Hotuta T."/>
            <person name="Kusano J."/>
            <person name="Kanehori K."/>
            <person name="Takahashi-Fujii A."/>
            <person name="Hara H."/>
            <person name="Tanase T.-O."/>
            <person name="Nomura Y."/>
            <person name="Togiya S."/>
            <person name="Komai F."/>
            <person name="Hara R."/>
            <person name="Takeuchi K."/>
            <person name="Arita M."/>
            <person name="Imose N."/>
            <person name="Musashino K."/>
            <person name="Yuuki H."/>
            <person name="Oshima A."/>
            <person name="Sasaki N."/>
            <person name="Aotsuka S."/>
            <person name="Yoshikawa Y."/>
            <person name="Matsunawa H."/>
            <person name="Ichihara T."/>
            <person name="Shiohata N."/>
            <person name="Sano S."/>
            <person name="Moriya S."/>
            <person name="Momiyama H."/>
            <person name="Satoh N."/>
            <person name="Takami S."/>
            <person name="Terashima Y."/>
            <person name="Suzuki O."/>
            <person name="Nakagawa S."/>
            <person name="Senoh A."/>
            <person name="Mizoguchi H."/>
            <person name="Goto Y."/>
            <person name="Shimizu F."/>
            <person name="Wakebe H."/>
            <person name="Hishigaki H."/>
            <person name="Watanabe T."/>
            <person name="Sugiyama A."/>
            <person name="Takemoto M."/>
            <person name="Kawakami B."/>
            <person name="Yamazaki M."/>
            <person name="Watanabe K."/>
            <person name="Kumagai A."/>
            <person name="Itakura S."/>
            <person name="Fukuzumi Y."/>
            <person name="Fujimori Y."/>
            <person name="Komiyama M."/>
            <person name="Tashiro H."/>
            <person name="Tanigami A."/>
            <person name="Fujiwara T."/>
            <person name="Ono T."/>
            <person name="Yamada K."/>
            <person name="Fujii Y."/>
            <person name="Ozaki K."/>
            <person name="Hirao M."/>
            <person name="Ohmori Y."/>
            <person name="Kawabata A."/>
            <person name="Hikiji T."/>
            <person name="Kobatake N."/>
            <person name="Inagaki H."/>
            <person name="Ikema Y."/>
            <person name="Okamoto S."/>
            <person name="Okitani R."/>
            <person name="Kawakami T."/>
            <person name="Noguchi S."/>
            <person name="Itoh T."/>
            <person name="Shigeta K."/>
            <person name="Senba T."/>
            <person name="Matsumura K."/>
            <person name="Nakajima Y."/>
            <person name="Mizuno T."/>
            <person name="Morinaga M."/>
            <person name="Sasaki M."/>
            <person name="Togashi T."/>
            <person name="Oyama M."/>
            <person name="Hata H."/>
            <person name="Watanabe M."/>
            <person name="Komatsu T."/>
            <person name="Mizushima-Sugano J."/>
            <person name="Satoh T."/>
            <person name="Shirai Y."/>
            <person name="Takahashi Y."/>
            <person name="Nakagawa K."/>
            <person name="Okumura K."/>
            <person name="Nagase T."/>
            <person name="Nomura N."/>
            <person name="Kikuchi H."/>
            <person name="Masuho Y."/>
            <person name="Yamashita R."/>
            <person name="Nakai K."/>
            <person name="Yada T."/>
            <person name="Nakamura Y."/>
            <person name="Ohara O."/>
            <person name="Isogai T."/>
            <person name="Sugano S."/>
        </authorList>
    </citation>
    <scope>NUCLEOTIDE SEQUENCE [LARGE SCALE MRNA] (ISOFORMS 1; 2 AND 3)</scope>
    <scope>VARIANT THR-156</scope>
    <source>
        <tissue>Placenta</tissue>
        <tissue>Small intestine</tissue>
        <tissue>Synovium</tissue>
        <tissue>Trachea</tissue>
    </source>
</reference>
<reference key="3">
    <citation type="submission" date="2006-04" db="EMBL/GenBank/DDBJ databases">
        <authorList>
            <consortium name="NIEHS SNPs program"/>
        </authorList>
    </citation>
    <scope>NUCLEOTIDE SEQUENCE [GENOMIC DNA]</scope>
    <scope>VARIANT ASN-266</scope>
</reference>
<reference key="4">
    <citation type="journal article" date="2005" name="Nature">
        <title>Generation and annotation of the DNA sequences of human chromosomes 2 and 4.</title>
        <authorList>
            <person name="Hillier L.W."/>
            <person name="Graves T.A."/>
            <person name="Fulton R.S."/>
            <person name="Fulton L.A."/>
            <person name="Pepin K.H."/>
            <person name="Minx P."/>
            <person name="Wagner-McPherson C."/>
            <person name="Layman D."/>
            <person name="Wylie K."/>
            <person name="Sekhon M."/>
            <person name="Becker M.C."/>
            <person name="Fewell G.A."/>
            <person name="Delehaunty K.D."/>
            <person name="Miner T.L."/>
            <person name="Nash W.E."/>
            <person name="Kremitzki C."/>
            <person name="Oddy L."/>
            <person name="Du H."/>
            <person name="Sun H."/>
            <person name="Bradshaw-Cordum H."/>
            <person name="Ali J."/>
            <person name="Carter J."/>
            <person name="Cordes M."/>
            <person name="Harris A."/>
            <person name="Isak A."/>
            <person name="van Brunt A."/>
            <person name="Nguyen C."/>
            <person name="Du F."/>
            <person name="Courtney L."/>
            <person name="Kalicki J."/>
            <person name="Ozersky P."/>
            <person name="Abbott S."/>
            <person name="Armstrong J."/>
            <person name="Belter E.A."/>
            <person name="Caruso L."/>
            <person name="Cedroni M."/>
            <person name="Cotton M."/>
            <person name="Davidson T."/>
            <person name="Desai A."/>
            <person name="Elliott G."/>
            <person name="Erb T."/>
            <person name="Fronick C."/>
            <person name="Gaige T."/>
            <person name="Haakenson W."/>
            <person name="Haglund K."/>
            <person name="Holmes A."/>
            <person name="Harkins R."/>
            <person name="Kim K."/>
            <person name="Kruchowski S.S."/>
            <person name="Strong C.M."/>
            <person name="Grewal N."/>
            <person name="Goyea E."/>
            <person name="Hou S."/>
            <person name="Levy A."/>
            <person name="Martinka S."/>
            <person name="Mead K."/>
            <person name="McLellan M.D."/>
            <person name="Meyer R."/>
            <person name="Randall-Maher J."/>
            <person name="Tomlinson C."/>
            <person name="Dauphin-Kohlberg S."/>
            <person name="Kozlowicz-Reilly A."/>
            <person name="Shah N."/>
            <person name="Swearengen-Shahid S."/>
            <person name="Snider J."/>
            <person name="Strong J.T."/>
            <person name="Thompson J."/>
            <person name="Yoakum M."/>
            <person name="Leonard S."/>
            <person name="Pearman C."/>
            <person name="Trani L."/>
            <person name="Radionenko M."/>
            <person name="Waligorski J.E."/>
            <person name="Wang C."/>
            <person name="Rock S.M."/>
            <person name="Tin-Wollam A.-M."/>
            <person name="Maupin R."/>
            <person name="Latreille P."/>
            <person name="Wendl M.C."/>
            <person name="Yang S.-P."/>
            <person name="Pohl C."/>
            <person name="Wallis J.W."/>
            <person name="Spieth J."/>
            <person name="Bieri T.A."/>
            <person name="Berkowicz N."/>
            <person name="Nelson J.O."/>
            <person name="Osborne J."/>
            <person name="Ding L."/>
            <person name="Meyer R."/>
            <person name="Sabo A."/>
            <person name="Shotland Y."/>
            <person name="Sinha P."/>
            <person name="Wohldmann P.E."/>
            <person name="Cook L.L."/>
            <person name="Hickenbotham M.T."/>
            <person name="Eldred J."/>
            <person name="Williams D."/>
            <person name="Jones T.A."/>
            <person name="She X."/>
            <person name="Ciccarelli F.D."/>
            <person name="Izaurralde E."/>
            <person name="Taylor J."/>
            <person name="Schmutz J."/>
            <person name="Myers R.M."/>
            <person name="Cox D.R."/>
            <person name="Huang X."/>
            <person name="McPherson J.D."/>
            <person name="Mardis E.R."/>
            <person name="Clifton S.W."/>
            <person name="Warren W.C."/>
            <person name="Chinwalla A.T."/>
            <person name="Eddy S.R."/>
            <person name="Marra M.A."/>
            <person name="Ovcharenko I."/>
            <person name="Furey T.S."/>
            <person name="Miller W."/>
            <person name="Eichler E.E."/>
            <person name="Bork P."/>
            <person name="Suyama M."/>
            <person name="Torrents D."/>
            <person name="Waterston R.H."/>
            <person name="Wilson R.K."/>
        </authorList>
    </citation>
    <scope>NUCLEOTIDE SEQUENCE [LARGE SCALE GENOMIC DNA]</scope>
</reference>
<reference key="5">
    <citation type="submission" date="2005-09" db="EMBL/GenBank/DDBJ databases">
        <authorList>
            <person name="Mural R.J."/>
            <person name="Istrail S."/>
            <person name="Sutton G.G."/>
            <person name="Florea L."/>
            <person name="Halpern A.L."/>
            <person name="Mobarry C.M."/>
            <person name="Lippert R."/>
            <person name="Walenz B."/>
            <person name="Shatkay H."/>
            <person name="Dew I."/>
            <person name="Miller J.R."/>
            <person name="Flanigan M.J."/>
            <person name="Edwards N.J."/>
            <person name="Bolanos R."/>
            <person name="Fasulo D."/>
            <person name="Halldorsson B.V."/>
            <person name="Hannenhalli S."/>
            <person name="Turner R."/>
            <person name="Yooseph S."/>
            <person name="Lu F."/>
            <person name="Nusskern D.R."/>
            <person name="Shue B.C."/>
            <person name="Zheng X.H."/>
            <person name="Zhong F."/>
            <person name="Delcher A.L."/>
            <person name="Huson D.H."/>
            <person name="Kravitz S.A."/>
            <person name="Mouchard L."/>
            <person name="Reinert K."/>
            <person name="Remington K.A."/>
            <person name="Clark A.G."/>
            <person name="Waterman M.S."/>
            <person name="Eichler E.E."/>
            <person name="Adams M.D."/>
            <person name="Hunkapiller M.W."/>
            <person name="Myers E.W."/>
            <person name="Venter J.C."/>
        </authorList>
    </citation>
    <scope>NUCLEOTIDE SEQUENCE [LARGE SCALE GENOMIC DNA]</scope>
    <scope>VARIANT ASN-266</scope>
</reference>
<reference key="6">
    <citation type="journal article" date="2004" name="Genome Res.">
        <title>The status, quality, and expansion of the NIH full-length cDNA project: the Mammalian Gene Collection (MGC).</title>
        <authorList>
            <consortium name="The MGC Project Team"/>
        </authorList>
    </citation>
    <scope>NUCLEOTIDE SEQUENCE [LARGE SCALE MRNA] (ISOFORM 1)</scope>
    <scope>VARIANT ASN-266</scope>
    <source>
        <tissue>Skin</tissue>
    </source>
</reference>
<reference key="7">
    <citation type="journal article" date="2004" name="Hum. Genet.">
        <title>Analysis of genes implicated in iron regulation in individuals presenting with primary iron overload.</title>
        <authorList>
            <person name="Zaahl M.G."/>
            <person name="Merryweather-Clarke A.T."/>
            <person name="Kotze M.J."/>
            <person name="van der Merwe S."/>
            <person name="Warnich L."/>
            <person name="Robson K.J.H."/>
        </authorList>
    </citation>
    <scope>NUCLEOTIDE SEQUENCE [GENOMIC DNA] OF 65-134 AND 187-285</scope>
    <scope>VARIANT HIS-226</scope>
</reference>
<reference key="8">
    <citation type="journal article" date="2003" name="Gastroenterology">
        <title>Duodenal cytochrome b and hephaestin expression in patients with iron deficiency and hemochromatosis.</title>
        <authorList>
            <person name="Zoller H."/>
            <person name="Theurl I."/>
            <person name="Koch R.O."/>
            <person name="McKie A.T."/>
            <person name="Vogel W."/>
            <person name="Weiss G."/>
        </authorList>
    </citation>
    <scope>SUBCELLULAR LOCATION</scope>
    <scope>INDUCTION</scope>
</reference>
<reference key="9">
    <citation type="journal article" date="2006" name="Cell">
        <title>Global, in vivo, and site-specific phosphorylation dynamics in signaling networks.</title>
        <authorList>
            <person name="Olsen J.V."/>
            <person name="Blagoev B."/>
            <person name="Gnad F."/>
            <person name="Macek B."/>
            <person name="Kumar C."/>
            <person name="Mortensen P."/>
            <person name="Mann M."/>
        </authorList>
    </citation>
    <scope>IDENTIFICATION BY MASS SPECTROMETRY [LARGE SCALE ANALYSIS]</scope>
    <source>
        <tissue>Cervix carcinoma</tissue>
    </source>
</reference>
<reference key="10">
    <citation type="journal article" date="2008" name="Proc. Natl. Acad. Sci. U.S.A.">
        <title>A quantitative atlas of mitotic phosphorylation.</title>
        <authorList>
            <person name="Dephoure N."/>
            <person name="Zhou C."/>
            <person name="Villen J."/>
            <person name="Beausoleil S.A."/>
            <person name="Bakalarski C.E."/>
            <person name="Elledge S.J."/>
            <person name="Gygi S.P."/>
        </authorList>
    </citation>
    <scope>PHOSPHORYLATION [LARGE SCALE ANALYSIS] AT THR-285</scope>
    <scope>IDENTIFICATION BY MASS SPECTROMETRY [LARGE SCALE ANALYSIS]</scope>
    <source>
        <tissue>Cervix carcinoma</tissue>
    </source>
</reference>
<reference key="11">
    <citation type="journal article" date="2009" name="Br. J. Haematol.">
        <title>A novel association between a SNP in CYBRD1 and serum ferritin levels in a cohort study of HFE hereditary haemochromatosis.</title>
        <authorList>
            <person name="Constantine C.C."/>
            <person name="Anderson G.J."/>
            <person name="Vulpe C.D."/>
            <person name="McLaren C.E."/>
            <person name="Bahlo M."/>
            <person name="Yeap H.L."/>
            <person name="Gertig D.M."/>
            <person name="Osborne N.J."/>
            <person name="Bertalli N.A."/>
            <person name="Beckman K.B."/>
            <person name="Chen V."/>
            <person name="Matak P."/>
            <person name="McKie A.T."/>
            <person name="Delatycki M.B."/>
            <person name="Olynyk J.K."/>
            <person name="English D.R."/>
            <person name="Southey M.C."/>
            <person name="Giles G.G."/>
            <person name="Hopper J.L."/>
            <person name="Allen K.J."/>
            <person name="Gurrin L.C."/>
        </authorList>
    </citation>
    <scope>POLYMORPHISM</scope>
    <scope>ROLE IN HEREDITARY HEMOCHROMATOSIS</scope>
</reference>
<reference key="12">
    <citation type="journal article" date="2009" name="Mol. Cell. Proteomics">
        <title>Large-scale proteomics analysis of the human kinome.</title>
        <authorList>
            <person name="Oppermann F.S."/>
            <person name="Gnad F."/>
            <person name="Olsen J.V."/>
            <person name="Hornberger R."/>
            <person name="Greff Z."/>
            <person name="Keri G."/>
            <person name="Mann M."/>
            <person name="Daub H."/>
        </authorList>
    </citation>
    <scope>IDENTIFICATION BY MASS SPECTROMETRY [LARGE SCALE ANALYSIS]</scope>
</reference>
<reference key="13">
    <citation type="journal article" date="2009" name="Sci. Signal.">
        <title>Quantitative phosphoproteomic analysis of T cell receptor signaling reveals system-wide modulation of protein-protein interactions.</title>
        <authorList>
            <person name="Mayya V."/>
            <person name="Lundgren D.H."/>
            <person name="Hwang S.-I."/>
            <person name="Rezaul K."/>
            <person name="Wu L."/>
            <person name="Eng J.K."/>
            <person name="Rodionov V."/>
            <person name="Han D.K."/>
        </authorList>
    </citation>
    <scope>PHOSPHORYLATION [LARGE SCALE ANALYSIS] AT THR-285</scope>
    <scope>IDENTIFICATION BY MASS SPECTROMETRY [LARGE SCALE ANALYSIS]</scope>
    <source>
        <tissue>Leukemic T-cell</tissue>
    </source>
</reference>
<reference key="14">
    <citation type="journal article" date="2010" name="Sci. Signal.">
        <title>Quantitative phosphoproteomics reveals widespread full phosphorylation site occupancy during mitosis.</title>
        <authorList>
            <person name="Olsen J.V."/>
            <person name="Vermeulen M."/>
            <person name="Santamaria A."/>
            <person name="Kumar C."/>
            <person name="Miller M.L."/>
            <person name="Jensen L.J."/>
            <person name="Gnad F."/>
            <person name="Cox J."/>
            <person name="Jensen T.S."/>
            <person name="Nigg E.A."/>
            <person name="Brunak S."/>
            <person name="Mann M."/>
        </authorList>
    </citation>
    <scope>PHOSPHORYLATION [LARGE SCALE ANALYSIS] AT THR-285</scope>
    <scope>IDENTIFICATION BY MASS SPECTROMETRY [LARGE SCALE ANALYSIS]</scope>
    <source>
        <tissue>Cervix carcinoma</tissue>
    </source>
</reference>
<reference key="15">
    <citation type="journal article" date="2013" name="J. Proteome Res.">
        <title>Toward a comprehensive characterization of a human cancer cell phosphoproteome.</title>
        <authorList>
            <person name="Zhou H."/>
            <person name="Di Palma S."/>
            <person name="Preisinger C."/>
            <person name="Peng M."/>
            <person name="Polat A.N."/>
            <person name="Heck A.J."/>
            <person name="Mohammed S."/>
        </authorList>
    </citation>
    <scope>PHOSPHORYLATION [LARGE SCALE ANALYSIS] AT SER-232 AND THR-285</scope>
    <scope>IDENTIFICATION BY MASS SPECTROMETRY [LARGE SCALE ANALYSIS]</scope>
    <source>
        <tissue>Erythroleukemia</tissue>
    </source>
</reference>
<reference key="16">
    <citation type="journal article" date="2005" name="Hum. Genet.">
        <title>Gene symbol: DCYTB/CYBRD1. Disease: primary iron overload.</title>
        <authorList>
            <person name="Zaahl M.G."/>
            <person name="Merryweather-Clarke A.T."/>
            <person name="Kotze M.J."/>
            <person name="van der Merwe S."/>
            <person name="Warnich L."/>
            <person name="Robson K.J."/>
        </authorList>
    </citation>
    <scope>VARIANT HIS-226</scope>
</reference>
<reference key="17">
    <citation type="journal article" date="2005" name="Hum. Genet.">
        <title>Gene symbol: DCYTB/CYBRD1. Disease: primary iron overload.</title>
        <authorList>
            <person name="Zaahl M.G."/>
            <person name="Merryweather-Clarke A.T."/>
            <person name="Kotze M.J."/>
            <person name="van der Merwe S."/>
            <person name="Warnich L."/>
            <person name="Robson K.J."/>
        </authorList>
    </citation>
    <scope>ROLE IN HEREDITARY HEMOCHROMATOSIS</scope>
</reference>
<reference key="18">
    <citation type="journal article" date="2005" name="Hum. Genet.">
        <title>Gene symbol: DCYTB/CYBRD1. Disease: primary iron overload.</title>
        <authorList>
            <person name="Zaahl M.G."/>
            <person name="Merryweather-Clarke A.T."/>
            <person name="Kotze M.J."/>
            <person name="van der Merwe S."/>
            <person name="Warnich L."/>
            <person name="Robson K.J."/>
        </authorList>
    </citation>
    <scope>ROLE IN HEREDITARY HEMOCHROMATOSIS</scope>
</reference>
<reference key="19">
    <citation type="journal article" date="2006" name="Eur. J. Clin. Invest.">
        <title>Immunolocalization of duodenal cytochrome B: a relationship with circulating markers of iron status.</title>
        <authorList>
            <person name="Li A.C.Y."/>
            <person name="Warley A."/>
            <person name="Thoree V."/>
            <person name="Simpson R.J."/>
            <person name="McKie A.T."/>
            <person name="Kodjabashia K."/>
            <person name="Thompson R.P.H."/>
            <person name="Powell J.J."/>
        </authorList>
    </citation>
    <scope>INDUCTION</scope>
</reference>
<reference key="20">
    <citation type="journal article" date="2006" name="J. Biol. Chem.">
        <title>Human erythrocyte membranes contain a cytochrome b561 that may be involved in extracellular ascorbate recycling.</title>
        <authorList>
            <person name="Su D."/>
            <person name="May J.M."/>
            <person name="Koury M.J."/>
            <person name="Asard H."/>
        </authorList>
    </citation>
    <scope>FUNCTION</scope>
    <scope>CATALYTIC ACTIVITY</scope>
    <scope>SUBCELLULAR LOCATION</scope>
    <scope>TISSUE SPECIFICITY</scope>
</reference>
<reference key="21">
    <citation type="journal article" date="2006" name="Am. J. Physiol.">
        <title>Duodenal cytochrome b: a novel ferrireductase in airway epithelial cells.</title>
        <authorList>
            <person name="Turi J.L."/>
            <person name="Wang X."/>
            <person name="McKie A.T."/>
            <person name="Nozik-Grayck E."/>
            <person name="Mamo L.B."/>
            <person name="Crissman K."/>
            <person name="Piantadosi C.A."/>
            <person name="Ghio A.J."/>
        </authorList>
    </citation>
    <scope>FUNCTION</scope>
    <scope>TISSUE SPECIFICITY</scope>
</reference>
<reference evidence="27 28" key="22">
    <citation type="journal article" date="2018" name="Commun. Biol.">
        <title>Structural basis for promotion of duodenal iron absorption by enteric ferric reductase with ascorbate.</title>
        <authorList>
            <person name="Ganasen M."/>
            <person name="Togashi H."/>
            <person name="Takeda H."/>
            <person name="Asakura H."/>
            <person name="Tosha T."/>
            <person name="Yamashita K."/>
            <person name="Hirata K."/>
            <person name="Nariai Y."/>
            <person name="Urano T."/>
            <person name="Yuan X."/>
            <person name="Hamza I."/>
            <person name="Mauk A.G."/>
            <person name="Shiro Y."/>
            <person name="Sugimoto H."/>
            <person name="Sawai H."/>
        </authorList>
    </citation>
    <scope>X-RAY CRYSTALLOGRAPHY (2.60 ANGSTROMS) IN COMPLEX WITH HEME B; ASCORBATE AND ZINC</scope>
    <scope>FUNCTION</scope>
    <scope>CATALYTIC ACTIVITY</scope>
    <scope>COFACTOR</scope>
    <scope>ACTIVITY REGULATION</scope>
    <scope>SUBUNIT</scope>
    <scope>TOPOLOGY</scope>
    <scope>REGION</scope>
    <scope>MUTAGENESIS OF PHE-58; LYS-79; LYS-83; ASN-107; HIS-108; TYR-117; TYR-131; ARG-152 AND PHE-184</scope>
</reference>
<sequence length="286" mass="31641">MAMEGYWRFLALLGSALLVGFLSVIFALVWVLHYREGLGWDGSALEFNWHPVLMVTGFVFIQGIAIIVYRLPWTWKCSKLLMKSIHAGLNAVAAILAIISVVAVFENHNVNNIANMYSLHSWVGLIAVICYLLQLLSGFSVFLLPWAPLSLRAFLMPIHVYSGIVIFGTVIATALMGLTEKLIFSLRDPAYSTFPPEGVFVNTLGLLILVFGALIFWIVTRPQWKRPKEPNSTILHPNGGTEQGARGSMPAYSGNNMDKSDSELNSEVAARKRNLALDEAGQRSTM</sequence>
<accession>Q53TN4</accession>
<accession>B2RE79</accession>
<accession>B4DWD7</accession>
<accession>Q6KC16</accession>
<accession>Q6KC17</accession>
<accession>Q6P147</accession>
<accession>Q6ZR51</accession>
<accession>Q9H0Q8</accession>
<accession>Q9H5G5</accession>
<proteinExistence type="evidence at protein level"/>
<comment type="function">
    <text evidence="1 11 13 20">Plasma membrane reductase that uses cytoplasmic ascorbate as an electron donor to reduce extracellular Fe(3+) into Fe(2+) (PubMed:30272000). Probably functions in dietary iron absorption at the brush border of duodenal enterocytes by producing Fe(2+), the divalent form of iron that can be transported into enterocytes (PubMed:30272000). It is also able to reduce extracellular monodehydro-L-ascorbate and may be involved in extracellular ascorbate regeneration by erythrocytes in blood (PubMed:17068337). May also act as a ferrireductase in airway epithelial cells (Probable). May also function as a cupric transmembrane reductase (By similarity).</text>
</comment>
<comment type="catalytic activity">
    <reaction evidence="11 13">
        <text>Fe(3+)(out) + L-ascorbate(in) = monodehydro-L-ascorbate radical(in) + Fe(2+)(out) + H(+)</text>
        <dbReference type="Rhea" id="RHEA:30403"/>
        <dbReference type="ChEBI" id="CHEBI:15378"/>
        <dbReference type="ChEBI" id="CHEBI:29033"/>
        <dbReference type="ChEBI" id="CHEBI:29034"/>
        <dbReference type="ChEBI" id="CHEBI:38290"/>
        <dbReference type="ChEBI" id="CHEBI:59513"/>
        <dbReference type="EC" id="7.2.1.3"/>
    </reaction>
    <physiologicalReaction direction="left-to-right" evidence="23">
        <dbReference type="Rhea" id="RHEA:30404"/>
    </physiologicalReaction>
</comment>
<comment type="catalytic activity">
    <reaction evidence="1">
        <text>Cu(2+)(out) + L-ascorbate(in) = Cu(+)(out) + monodehydro-L-ascorbate radical(in) + H(+)</text>
        <dbReference type="Rhea" id="RHEA:66656"/>
        <dbReference type="ChEBI" id="CHEBI:15378"/>
        <dbReference type="ChEBI" id="CHEBI:29036"/>
        <dbReference type="ChEBI" id="CHEBI:38290"/>
        <dbReference type="ChEBI" id="CHEBI:49552"/>
        <dbReference type="ChEBI" id="CHEBI:59513"/>
    </reaction>
    <physiologicalReaction direction="left-to-right" evidence="1">
        <dbReference type="Rhea" id="RHEA:66657"/>
    </physiologicalReaction>
</comment>
<comment type="catalytic activity">
    <reaction evidence="11">
        <text>monodehydro-L-ascorbate radical(out) + L-ascorbate(in) = monodehydro-L-ascorbate radical(in) + L-ascorbate(out)</text>
        <dbReference type="Rhea" id="RHEA:66524"/>
        <dbReference type="ChEBI" id="CHEBI:38290"/>
        <dbReference type="ChEBI" id="CHEBI:59513"/>
    </reaction>
    <physiologicalReaction direction="left-to-right" evidence="23">
        <dbReference type="Rhea" id="RHEA:66525"/>
    </physiologicalReaction>
</comment>
<comment type="cofactor">
    <cofactor evidence="13">
        <name>heme b</name>
        <dbReference type="ChEBI" id="CHEBI:60344"/>
    </cofactor>
    <text evidence="13">Binds 2 heme b groups non-covalently.</text>
</comment>
<comment type="activity regulation">
    <text evidence="13">Activated by chelators like citrate, malate, and oxalate specially at alkaline pH.</text>
</comment>
<comment type="subunit">
    <text evidence="13">Homodimer.</text>
</comment>
<comment type="interaction">
    <interactant intactId="EBI-8637742">
        <id>Q53TN4</id>
    </interactant>
    <interactant intactId="EBI-718729">
        <id>P55212</id>
        <label>CASP6</label>
    </interactant>
    <organismsDiffer>false</organismsDiffer>
    <experiments>3</experiments>
</comment>
<comment type="interaction">
    <interactant intactId="EBI-8637742">
        <id>Q53TN4</id>
    </interactant>
    <interactant intactId="EBI-724839">
        <id>Q14318</id>
        <label>FKBP8</label>
    </interactant>
    <organismsDiffer>false</organismsDiffer>
    <experiments>3</experiments>
</comment>
<comment type="interaction">
    <interactant intactId="EBI-8637742">
        <id>Q53TN4</id>
    </interactant>
    <interactant intactId="EBI-6166686">
        <id>Q96F15</id>
        <label>GIMAP5</label>
    </interactant>
    <organismsDiffer>false</organismsDiffer>
    <experiments>3</experiments>
</comment>
<comment type="interaction">
    <interactant intactId="EBI-8637742">
        <id>Q53TN4</id>
    </interactant>
    <interactant intactId="EBI-4401517">
        <id>O14653</id>
        <label>GOSR2</label>
    </interactant>
    <organismsDiffer>false</organismsDiffer>
    <experiments>3</experiments>
</comment>
<comment type="interaction">
    <interactant intactId="EBI-8637742">
        <id>Q53TN4</id>
    </interactant>
    <interactant intactId="EBI-2806151">
        <id>P09601</id>
        <label>HMOX1</label>
    </interactant>
    <organismsDiffer>false</organismsDiffer>
    <experiments>3</experiments>
</comment>
<comment type="interaction">
    <interactant intactId="EBI-8637742">
        <id>Q53TN4</id>
    </interactant>
    <interactant intactId="EBI-21591415">
        <id>P13473-2</id>
        <label>LAMP2</label>
    </interactant>
    <organismsDiffer>false</organismsDiffer>
    <experiments>3</experiments>
</comment>
<comment type="interaction">
    <interactant intactId="EBI-8637742">
        <id>Q53TN4</id>
    </interactant>
    <interactant intactId="EBI-12033434">
        <id>Q9UBY5</id>
        <label>LPAR3</label>
    </interactant>
    <organismsDiffer>false</organismsDiffer>
    <experiments>3</experiments>
</comment>
<comment type="interaction">
    <interactant intactId="EBI-8637742">
        <id>Q53TN4</id>
    </interactant>
    <interactant intactId="EBI-608347">
        <id>Q04941</id>
        <label>PLP2</label>
    </interactant>
    <organismsDiffer>false</organismsDiffer>
    <experiments>3</experiments>
</comment>
<comment type="interaction">
    <interactant intactId="EBI-8637742">
        <id>Q53TN4</id>
    </interactant>
    <interactant intactId="EBI-5280197">
        <id>O75400-2</id>
        <label>PRPF40A</label>
    </interactant>
    <organismsDiffer>false</organismsDiffer>
    <experiments>3</experiments>
</comment>
<comment type="interaction">
    <interactant intactId="EBI-8637742">
        <id>Q53TN4</id>
    </interactant>
    <interactant intactId="EBI-712367">
        <id>Q9UI14</id>
        <label>RABAC1</label>
    </interactant>
    <organismsDiffer>false</organismsDiffer>
    <experiments>3</experiments>
</comment>
<comment type="interaction">
    <interactant intactId="EBI-8637742">
        <id>Q53TN4</id>
    </interactant>
    <interactant intactId="EBI-8652744">
        <id>Q96IW7</id>
        <label>SEC22A</label>
    </interactant>
    <organismsDiffer>false</organismsDiffer>
    <experiments>3</experiments>
</comment>
<comment type="interaction">
    <interactant intactId="EBI-8637742">
        <id>Q53TN4</id>
    </interactant>
    <interactant intactId="EBI-10329948">
        <id>Q9Y6X1</id>
        <label>SERP1</label>
    </interactant>
    <organismsDiffer>false</organismsDiffer>
    <experiments>3</experiments>
</comment>
<comment type="interaction">
    <interactant intactId="EBI-8637742">
        <id>Q53TN4</id>
    </interactant>
    <interactant intactId="EBI-749270">
        <id>Q8N6R1</id>
        <label>SERP2</label>
    </interactant>
    <organismsDiffer>false</organismsDiffer>
    <experiments>3</experiments>
</comment>
<comment type="interaction">
    <interactant intactId="EBI-8637742">
        <id>Q53TN4</id>
    </interactant>
    <interactant intactId="EBI-2623095">
        <id>Q9Y371</id>
        <label>SH3GLB1</label>
    </interactant>
    <organismsDiffer>false</organismsDiffer>
    <experiments>3</experiments>
</comment>
<comment type="interaction">
    <interactant intactId="EBI-8637742">
        <id>Q53TN4</id>
    </interactant>
    <interactant intactId="EBI-744942">
        <id>Q12846</id>
        <label>STX4</label>
    </interactant>
    <organismsDiffer>false</organismsDiffer>
    <experiments>7</experiments>
</comment>
<comment type="interaction">
    <interactant intactId="EBI-8637742">
        <id>Q53TN4</id>
    </interactant>
    <interactant intactId="EBI-3221827">
        <id>O15400</id>
        <label>STX7</label>
    </interactant>
    <organismsDiffer>false</organismsDiffer>
    <experiments>3</experiments>
</comment>
<comment type="interaction">
    <interactant intactId="EBI-8637742">
        <id>Q53TN4</id>
    </interactant>
    <interactant intactId="EBI-727322">
        <id>Q9BXJ8</id>
        <label>TMEM120A</label>
    </interactant>
    <organismsDiffer>false</organismsDiffer>
    <experiments>3</experiments>
</comment>
<comment type="interaction">
    <interactant intactId="EBI-8637742">
        <id>Q53TN4</id>
    </interactant>
    <interactant intactId="EBI-6656213">
        <id>Q6PI78</id>
        <label>TMEM65</label>
    </interactant>
    <organismsDiffer>false</organismsDiffer>
    <experiments>3</experiments>
</comment>
<comment type="interaction">
    <interactant intactId="EBI-8637742">
        <id>Q53TN4</id>
    </interactant>
    <interactant intactId="EBI-1059156">
        <id>Q9P0L0</id>
        <label>VAPA</label>
    </interactant>
    <organismsDiffer>false</organismsDiffer>
    <experiments>3</experiments>
</comment>
<comment type="interaction">
    <interactant intactId="EBI-8637742">
        <id>Q53TN4</id>
    </interactant>
    <interactant intactId="EBI-1188298">
        <id>O95292</id>
        <label>VAPB</label>
    </interactant>
    <organismsDiffer>false</organismsDiffer>
    <experiments>3</experiments>
</comment>
<comment type="interaction">
    <interactant intactId="EBI-8637742">
        <id>Q53TN4</id>
    </interactant>
    <interactant intactId="EBI-718439">
        <id>O95159</id>
        <label>ZFPL1</label>
    </interactant>
    <organismsDiffer>false</organismsDiffer>
    <experiments>3</experiments>
</comment>
<comment type="subcellular location">
    <subcellularLocation>
        <location evidence="11">Cell membrane</location>
        <topology evidence="13">Multi-pass membrane protein</topology>
    </subcellularLocation>
    <subcellularLocation>
        <location evidence="19">Apical cell membrane</location>
        <topology evidence="13">Multi-pass membrane protein</topology>
    </subcellularLocation>
    <text evidence="5">Localized at the brush border of duodenal cells.</text>
</comment>
<comment type="alternative products">
    <event type="alternative splicing"/>
    <isoform>
        <id>Q53TN4-1</id>
        <name>1</name>
        <sequence type="displayed"/>
    </isoform>
    <isoform>
        <id>Q53TN4-2</id>
        <name>2</name>
        <sequence type="described" ref="VSP_042039"/>
    </isoform>
    <isoform>
        <id>Q53TN4-3</id>
        <name>3</name>
        <sequence type="described" ref="VSP_044945"/>
    </isoform>
</comment>
<comment type="tissue specificity">
    <text evidence="9 11">Present in erythrocyte membranes (at protein level). Also expressed in respiratory epithelium.</text>
</comment>
<comment type="induction">
    <text evidence="5 12">By iron deficiency (at protein level).</text>
</comment>
<comment type="polymorphism">
    <text evidence="21 22 24">Genetic variations in CYBRD1 may act as modifier of iron overload expression and account for the variance observed in serum ferritin levels in patients with hereditary hemochromatosis.</text>
</comment>
<comment type="sequence caution" evidence="18">
    <conflict type="erroneous gene model prediction">
        <sequence resource="EMBL-CDS" id="CAG29366"/>
    </conflict>
</comment>
<comment type="sequence caution" evidence="18">
    <conflict type="erroneous gene model prediction">
        <sequence resource="EMBL-CDS" id="CAG29367"/>
    </conflict>
</comment>
<organism>
    <name type="scientific">Homo sapiens</name>
    <name type="common">Human</name>
    <dbReference type="NCBI Taxonomy" id="9606"/>
    <lineage>
        <taxon>Eukaryota</taxon>
        <taxon>Metazoa</taxon>
        <taxon>Chordata</taxon>
        <taxon>Craniata</taxon>
        <taxon>Vertebrata</taxon>
        <taxon>Euteleostomi</taxon>
        <taxon>Mammalia</taxon>
        <taxon>Eutheria</taxon>
        <taxon>Euarchontoglires</taxon>
        <taxon>Primates</taxon>
        <taxon>Haplorrhini</taxon>
        <taxon>Catarrhini</taxon>
        <taxon>Hominidae</taxon>
        <taxon>Homo</taxon>
    </lineage>
</organism>
<gene>
    <name evidence="26" type="primary">CYBRD1</name>
    <name evidence="16" type="synonym">DCYTB</name>
    <name type="synonym">FRRS3</name>
</gene>
<dbReference type="EC" id="7.2.1.3" evidence="11 13"/>
<dbReference type="EMBL" id="AL136693">
    <property type="protein sequence ID" value="CAB66628.1"/>
    <property type="molecule type" value="mRNA"/>
</dbReference>
<dbReference type="EMBL" id="AK027115">
    <property type="protein sequence ID" value="BAB15661.1"/>
    <property type="molecule type" value="mRNA"/>
</dbReference>
<dbReference type="EMBL" id="AK128495">
    <property type="protein sequence ID" value="BAC87466.1"/>
    <property type="molecule type" value="mRNA"/>
</dbReference>
<dbReference type="EMBL" id="AK291731">
    <property type="protein sequence ID" value="BAF84420.1"/>
    <property type="molecule type" value="mRNA"/>
</dbReference>
<dbReference type="EMBL" id="AK301485">
    <property type="protein sequence ID" value="BAG62999.1"/>
    <property type="molecule type" value="mRNA"/>
</dbReference>
<dbReference type="EMBL" id="AK316588">
    <property type="protein sequence ID" value="BAG38176.1"/>
    <property type="molecule type" value="mRNA"/>
</dbReference>
<dbReference type="EMBL" id="DQ496101">
    <property type="protein sequence ID" value="ABF47090.1"/>
    <property type="molecule type" value="Genomic_DNA"/>
</dbReference>
<dbReference type="EMBL" id="AC007969">
    <property type="protein sequence ID" value="AAY14730.1"/>
    <property type="molecule type" value="Genomic_DNA"/>
</dbReference>
<dbReference type="EMBL" id="CH471058">
    <property type="protein sequence ID" value="EAX11210.1"/>
    <property type="molecule type" value="Genomic_DNA"/>
</dbReference>
<dbReference type="EMBL" id="BC065290">
    <property type="protein sequence ID" value="AAH65290.1"/>
    <property type="molecule type" value="mRNA"/>
</dbReference>
<dbReference type="EMBL" id="AJ715523">
    <property type="protein sequence ID" value="CAG29366.1"/>
    <property type="status" value="ALT_SEQ"/>
    <property type="molecule type" value="Genomic_DNA"/>
</dbReference>
<dbReference type="EMBL" id="AJ715524">
    <property type="protein sequence ID" value="CAG29367.1"/>
    <property type="status" value="ALT_SEQ"/>
    <property type="molecule type" value="Genomic_DNA"/>
</dbReference>
<dbReference type="CCDS" id="CCDS2244.1">
    <molecule id="Q53TN4-1"/>
</dbReference>
<dbReference type="CCDS" id="CCDS46449.1">
    <molecule id="Q53TN4-2"/>
</dbReference>
<dbReference type="CCDS" id="CCDS58736.1">
    <molecule id="Q53TN4-3"/>
</dbReference>
<dbReference type="RefSeq" id="NP_001120855.1">
    <molecule id="Q53TN4-2"/>
    <property type="nucleotide sequence ID" value="NM_001127383.2"/>
</dbReference>
<dbReference type="RefSeq" id="NP_001243838.1">
    <molecule id="Q53TN4-3"/>
    <property type="nucleotide sequence ID" value="NM_001256909.2"/>
</dbReference>
<dbReference type="RefSeq" id="NP_079119.3">
    <molecule id="Q53TN4-1"/>
    <property type="nucleotide sequence ID" value="NM_024843.3"/>
</dbReference>
<dbReference type="PDB" id="5ZLE">
    <property type="method" value="X-ray"/>
    <property type="resolution" value="2.60 A"/>
    <property type="chains" value="A=1-286"/>
</dbReference>
<dbReference type="PDB" id="5ZLG">
    <property type="method" value="X-ray"/>
    <property type="resolution" value="2.80 A"/>
    <property type="chains" value="A=1-286"/>
</dbReference>
<dbReference type="PDBsum" id="5ZLE"/>
<dbReference type="PDBsum" id="5ZLG"/>
<dbReference type="SMR" id="Q53TN4"/>
<dbReference type="BioGRID" id="122984">
    <property type="interactions" value="68"/>
</dbReference>
<dbReference type="FunCoup" id="Q53TN4">
    <property type="interactions" value="351"/>
</dbReference>
<dbReference type="IntAct" id="Q53TN4">
    <property type="interactions" value="64"/>
</dbReference>
<dbReference type="MINT" id="Q53TN4"/>
<dbReference type="STRING" id="9606.ENSP00000319141"/>
<dbReference type="DrugBank" id="DB13257">
    <property type="generic name" value="Ferrous sulfate anhydrous"/>
</dbReference>
<dbReference type="DrugBank" id="DB14520">
    <property type="generic name" value="Tetraferric tricitrate decahydrate"/>
</dbReference>
<dbReference type="TCDB" id="5.B.2.1.3">
    <property type="family name" value="the eukaryotic cytochrome b561 (cytb561) family"/>
</dbReference>
<dbReference type="GlyGen" id="Q53TN4">
    <property type="glycosylation" value="1 site, 1 O-linked glycan (1 site)"/>
</dbReference>
<dbReference type="iPTMnet" id="Q53TN4"/>
<dbReference type="PhosphoSitePlus" id="Q53TN4"/>
<dbReference type="SwissPalm" id="Q53TN4"/>
<dbReference type="BioMuta" id="CYBRD1"/>
<dbReference type="DMDM" id="74726934"/>
<dbReference type="jPOST" id="Q53TN4"/>
<dbReference type="MassIVE" id="Q53TN4"/>
<dbReference type="PaxDb" id="9606-ENSP00000319141"/>
<dbReference type="PeptideAtlas" id="Q53TN4"/>
<dbReference type="ProteomicsDB" id="5331"/>
<dbReference type="ProteomicsDB" id="62547">
    <molecule id="Q53TN4-1"/>
</dbReference>
<dbReference type="Pumba" id="Q53TN4"/>
<dbReference type="Antibodypedia" id="19375">
    <property type="antibodies" value="101 antibodies from 28 providers"/>
</dbReference>
<dbReference type="DNASU" id="79901"/>
<dbReference type="Ensembl" id="ENST00000321348.9">
    <molecule id="Q53TN4-1"/>
    <property type="protein sequence ID" value="ENSP00000319141.4"/>
    <property type="gene ID" value="ENSG00000071967.12"/>
</dbReference>
<dbReference type="Ensembl" id="ENST00000375252.3">
    <molecule id="Q53TN4-2"/>
    <property type="protein sequence ID" value="ENSP00000364401.3"/>
    <property type="gene ID" value="ENSG00000071967.12"/>
</dbReference>
<dbReference type="Ensembl" id="ENST00000409484.5">
    <molecule id="Q53TN4-3"/>
    <property type="protein sequence ID" value="ENSP00000386739.1"/>
    <property type="gene ID" value="ENSG00000071967.12"/>
</dbReference>
<dbReference type="GeneID" id="79901"/>
<dbReference type="KEGG" id="hsa:79901"/>
<dbReference type="MANE-Select" id="ENST00000321348.9">
    <property type="protein sequence ID" value="ENSP00000319141.4"/>
    <property type="RefSeq nucleotide sequence ID" value="NM_024843.4"/>
    <property type="RefSeq protein sequence ID" value="NP_079119.3"/>
</dbReference>
<dbReference type="UCSC" id="uc002ugy.5">
    <molecule id="Q53TN4-1"/>
    <property type="organism name" value="human"/>
</dbReference>
<dbReference type="AGR" id="HGNC:20797"/>
<dbReference type="CTD" id="79901"/>
<dbReference type="DisGeNET" id="79901"/>
<dbReference type="GeneCards" id="CYBRD1"/>
<dbReference type="HGNC" id="HGNC:20797">
    <property type="gene designation" value="CYBRD1"/>
</dbReference>
<dbReference type="HPA" id="ENSG00000071967">
    <property type="expression patterns" value="Low tissue specificity"/>
</dbReference>
<dbReference type="MIM" id="605745">
    <property type="type" value="gene"/>
</dbReference>
<dbReference type="neXtProt" id="NX_Q53TN4"/>
<dbReference type="OpenTargets" id="ENSG00000071967"/>
<dbReference type="PharmGKB" id="PA134970061"/>
<dbReference type="VEuPathDB" id="HostDB:ENSG00000071967"/>
<dbReference type="eggNOG" id="KOG1619">
    <property type="taxonomic scope" value="Eukaryota"/>
</dbReference>
<dbReference type="GeneTree" id="ENSGT00950000183197"/>
<dbReference type="HOGENOM" id="CLU_069712_1_2_1"/>
<dbReference type="InParanoid" id="Q53TN4"/>
<dbReference type="OMA" id="NWHPVLA"/>
<dbReference type="OrthoDB" id="907479at2759"/>
<dbReference type="PAN-GO" id="Q53TN4">
    <property type="GO annotations" value="2 GO annotations based on evolutionary models"/>
</dbReference>
<dbReference type="PhylomeDB" id="Q53TN4"/>
<dbReference type="TreeFam" id="TF314222"/>
<dbReference type="BioCyc" id="MetaCyc:HS01046-MONOMER"/>
<dbReference type="BRENDA" id="7.2.1.3">
    <property type="organism ID" value="2681"/>
</dbReference>
<dbReference type="PathwayCommons" id="Q53TN4"/>
<dbReference type="Reactome" id="R-HSA-917937">
    <property type="pathway name" value="Iron uptake and transport"/>
</dbReference>
<dbReference type="SignaLink" id="Q53TN4"/>
<dbReference type="BioGRID-ORCS" id="79901">
    <property type="hits" value="25 hits in 1156 CRISPR screens"/>
</dbReference>
<dbReference type="CD-CODE" id="FB4E32DD">
    <property type="entry name" value="Presynaptic clusters and postsynaptic densities"/>
</dbReference>
<dbReference type="ChiTaRS" id="CYBRD1">
    <property type="organism name" value="human"/>
</dbReference>
<dbReference type="GenomeRNAi" id="79901"/>
<dbReference type="Pharos" id="Q53TN4">
    <property type="development level" value="Tbio"/>
</dbReference>
<dbReference type="PRO" id="PR:Q53TN4"/>
<dbReference type="Proteomes" id="UP000005640">
    <property type="component" value="Chromosome 2"/>
</dbReference>
<dbReference type="RNAct" id="Q53TN4">
    <property type="molecule type" value="protein"/>
</dbReference>
<dbReference type="Bgee" id="ENSG00000071967">
    <property type="expression patterns" value="Expressed in calcaneal tendon and 179 other cell types or tissues"/>
</dbReference>
<dbReference type="ExpressionAtlas" id="Q53TN4">
    <property type="expression patterns" value="baseline and differential"/>
</dbReference>
<dbReference type="GO" id="GO:0016324">
    <property type="term" value="C:apical plasma membrane"/>
    <property type="evidence" value="ECO:0000314"/>
    <property type="project" value="UniProtKB"/>
</dbReference>
<dbReference type="GO" id="GO:0031526">
    <property type="term" value="C:brush border membrane"/>
    <property type="evidence" value="ECO:0000314"/>
    <property type="project" value="UniProtKB"/>
</dbReference>
<dbReference type="GO" id="GO:0070062">
    <property type="term" value="C:extracellular exosome"/>
    <property type="evidence" value="ECO:0007005"/>
    <property type="project" value="UniProtKB"/>
</dbReference>
<dbReference type="GO" id="GO:0005765">
    <property type="term" value="C:lysosomal membrane"/>
    <property type="evidence" value="ECO:0000318"/>
    <property type="project" value="GO_Central"/>
</dbReference>
<dbReference type="GO" id="GO:0016020">
    <property type="term" value="C:membrane"/>
    <property type="evidence" value="ECO:0000314"/>
    <property type="project" value="UniProtKB"/>
</dbReference>
<dbReference type="GO" id="GO:0005886">
    <property type="term" value="C:plasma membrane"/>
    <property type="evidence" value="ECO:0000314"/>
    <property type="project" value="HPA"/>
</dbReference>
<dbReference type="GO" id="GO:0042802">
    <property type="term" value="F:identical protein binding"/>
    <property type="evidence" value="ECO:0000314"/>
    <property type="project" value="UniProtKB"/>
</dbReference>
<dbReference type="GO" id="GO:0046872">
    <property type="term" value="F:metal ion binding"/>
    <property type="evidence" value="ECO:0007669"/>
    <property type="project" value="UniProtKB-KW"/>
</dbReference>
<dbReference type="GO" id="GO:0016491">
    <property type="term" value="F:oxidoreductase activity"/>
    <property type="evidence" value="ECO:0000318"/>
    <property type="project" value="GO_Central"/>
</dbReference>
<dbReference type="GO" id="GO:0016722">
    <property type="term" value="F:oxidoreductase activity, acting on metal ions"/>
    <property type="evidence" value="ECO:0000314"/>
    <property type="project" value="HGNC-UCL"/>
</dbReference>
<dbReference type="GO" id="GO:0140571">
    <property type="term" value="F:transmembrane ascorbate ferrireductase activity"/>
    <property type="evidence" value="ECO:0000314"/>
    <property type="project" value="UniProtKB"/>
</dbReference>
<dbReference type="GO" id="GO:0140575">
    <property type="term" value="F:transmembrane monodehydroascorbate reductase activity"/>
    <property type="evidence" value="ECO:0000314"/>
    <property type="project" value="UniProtKB"/>
</dbReference>
<dbReference type="GO" id="GO:0140576">
    <property type="term" value="P:ascorbate homeostasis"/>
    <property type="evidence" value="ECO:0000314"/>
    <property type="project" value="UniProtKB"/>
</dbReference>
<dbReference type="GO" id="GO:0006879">
    <property type="term" value="P:intracellular iron ion homeostasis"/>
    <property type="evidence" value="ECO:0000314"/>
    <property type="project" value="ARUK-UCL"/>
</dbReference>
<dbReference type="GO" id="GO:0060586">
    <property type="term" value="P:multicellular organismal-level iron ion homeostasis"/>
    <property type="evidence" value="ECO:0000314"/>
    <property type="project" value="UniProtKB"/>
</dbReference>
<dbReference type="GO" id="GO:0033215">
    <property type="term" value="P:reductive iron assimilation"/>
    <property type="evidence" value="ECO:0000305"/>
    <property type="project" value="UniProtKB"/>
</dbReference>
<dbReference type="GO" id="GO:0010039">
    <property type="term" value="P:response to iron ion"/>
    <property type="evidence" value="ECO:0007669"/>
    <property type="project" value="Ensembl"/>
</dbReference>
<dbReference type="CDD" id="cd08765">
    <property type="entry name" value="Cyt_b561_CYBRD1"/>
    <property type="match status" value="1"/>
</dbReference>
<dbReference type="DisProt" id="DP03005"/>
<dbReference type="FunFam" id="1.20.120.1770:FF:000001">
    <property type="entry name" value="Cytochrome b reductase 1"/>
    <property type="match status" value="1"/>
</dbReference>
<dbReference type="Gene3D" id="1.20.120.1770">
    <property type="match status" value="1"/>
</dbReference>
<dbReference type="InterPro" id="IPR043205">
    <property type="entry name" value="CYB561/CYBRD1-like"/>
</dbReference>
<dbReference type="InterPro" id="IPR006593">
    <property type="entry name" value="Cyt_b561/ferric_Rdtase_TM"/>
</dbReference>
<dbReference type="PANTHER" id="PTHR10106">
    <property type="entry name" value="CYTOCHROME B561-RELATED"/>
    <property type="match status" value="1"/>
</dbReference>
<dbReference type="PANTHER" id="PTHR10106:SF12">
    <property type="entry name" value="PLASMA MEMBRANE ASCORBATE-DEPENDENT REDUCTASE CYBRD1"/>
    <property type="match status" value="1"/>
</dbReference>
<dbReference type="Pfam" id="PF03188">
    <property type="entry name" value="Cytochrom_B561"/>
    <property type="match status" value="1"/>
</dbReference>
<dbReference type="SMART" id="SM00665">
    <property type="entry name" value="B561"/>
    <property type="match status" value="1"/>
</dbReference>
<dbReference type="PROSITE" id="PS50939">
    <property type="entry name" value="CYTOCHROME_B561"/>
    <property type="match status" value="1"/>
</dbReference>
<name>CYBR1_HUMAN</name>
<protein>
    <recommendedName>
        <fullName evidence="23 25">Plasma membrane ascorbate-dependent reductase CYBRD1</fullName>
        <ecNumber evidence="11 13">7.2.1.3</ecNumber>
    </recommendedName>
    <alternativeName>
        <fullName evidence="26">Cytochrome b reductase 1</fullName>
    </alternativeName>
    <alternativeName>
        <fullName evidence="16">Duodenal cytochrome b</fullName>
    </alternativeName>
    <alternativeName>
        <fullName>Ferric-chelate reductase 3</fullName>
    </alternativeName>
</protein>
<evidence type="ECO:0000250" key="1">
    <source>
        <dbReference type="UniProtKB" id="Q925G2"/>
    </source>
</evidence>
<evidence type="ECO:0000255" key="2">
    <source>
        <dbReference type="PROSITE-ProRule" id="PRU00242"/>
    </source>
</evidence>
<evidence type="ECO:0000256" key="3">
    <source>
        <dbReference type="SAM" id="MobiDB-lite"/>
    </source>
</evidence>
<evidence type="ECO:0000269" key="4">
    <source>
    </source>
</evidence>
<evidence type="ECO:0000269" key="5">
    <source>
    </source>
</evidence>
<evidence type="ECO:0000269" key="6">
    <source>
    </source>
</evidence>
<evidence type="ECO:0000269" key="7">
    <source>
    </source>
</evidence>
<evidence type="ECO:0000269" key="8">
    <source>
    </source>
</evidence>
<evidence type="ECO:0000269" key="9">
    <source>
    </source>
</evidence>
<evidence type="ECO:0000269" key="10">
    <source>
    </source>
</evidence>
<evidence type="ECO:0000269" key="11">
    <source>
    </source>
</evidence>
<evidence type="ECO:0000269" key="12">
    <source>
    </source>
</evidence>
<evidence type="ECO:0000269" key="13">
    <source>
    </source>
</evidence>
<evidence type="ECO:0000269" key="14">
    <source ref="3"/>
</evidence>
<evidence type="ECO:0000269" key="15">
    <source ref="5"/>
</evidence>
<evidence type="ECO:0000303" key="16">
    <source>
    </source>
</evidence>
<evidence type="ECO:0000303" key="17">
    <source>
    </source>
</evidence>
<evidence type="ECO:0000305" key="18"/>
<evidence type="ECO:0000305" key="19">
    <source>
    </source>
</evidence>
<evidence type="ECO:0000305" key="20">
    <source>
    </source>
</evidence>
<evidence type="ECO:0000305" key="21">
    <source>
    </source>
</evidence>
<evidence type="ECO:0000305" key="22">
    <source>
    </source>
</evidence>
<evidence type="ECO:0000305" key="23">
    <source>
    </source>
</evidence>
<evidence type="ECO:0000305" key="24">
    <source>
    </source>
</evidence>
<evidence type="ECO:0000305" key="25">
    <source>
    </source>
</evidence>
<evidence type="ECO:0000312" key="26">
    <source>
        <dbReference type="HGNC" id="HGNC:20797"/>
    </source>
</evidence>
<evidence type="ECO:0007744" key="27">
    <source>
        <dbReference type="PDB" id="5ZLE"/>
    </source>
</evidence>
<evidence type="ECO:0007744" key="28">
    <source>
        <dbReference type="PDB" id="5ZLG"/>
    </source>
</evidence>
<evidence type="ECO:0007744" key="29">
    <source>
    </source>
</evidence>
<evidence type="ECO:0007744" key="30">
    <source>
    </source>
</evidence>
<evidence type="ECO:0007744" key="31">
    <source>
    </source>
</evidence>
<evidence type="ECO:0007744" key="32">
    <source>
    </source>
</evidence>
<evidence type="ECO:0007829" key="33">
    <source>
        <dbReference type="PDB" id="5ZLE"/>
    </source>
</evidence>
<keyword id="KW-0002">3D-structure</keyword>
<keyword id="KW-0025">Alternative splicing</keyword>
<keyword id="KW-1003">Cell membrane</keyword>
<keyword id="KW-0249">Electron transport</keyword>
<keyword id="KW-0349">Heme</keyword>
<keyword id="KW-0408">Iron</keyword>
<keyword id="KW-0472">Membrane</keyword>
<keyword id="KW-0479">Metal-binding</keyword>
<keyword id="KW-0560">Oxidoreductase</keyword>
<keyword id="KW-0597">Phosphoprotein</keyword>
<keyword id="KW-1267">Proteomics identification</keyword>
<keyword id="KW-1185">Reference proteome</keyword>
<keyword id="KW-1278">Translocase</keyword>
<keyword id="KW-0812">Transmembrane</keyword>
<keyword id="KW-1133">Transmembrane helix</keyword>
<keyword id="KW-0813">Transport</keyword>
<feature type="chain" id="PRO_0000314830" description="Plasma membrane ascorbate-dependent reductase CYBRD1">
    <location>
        <begin position="1"/>
        <end position="286"/>
    </location>
</feature>
<feature type="topological domain" description="Cytoplasmic" evidence="25">
    <location>
        <begin position="1"/>
        <end position="7"/>
    </location>
</feature>
<feature type="transmembrane region" description="Helical; Name=1" evidence="13 27 28">
    <location>
        <begin position="8"/>
        <end position="32"/>
    </location>
</feature>
<feature type="topological domain" description="Extracellular" evidence="25">
    <location>
        <begin position="33"/>
        <end position="47"/>
    </location>
</feature>
<feature type="transmembrane region" description="Helical; Name=2" evidence="13 27 28">
    <location>
        <begin position="48"/>
        <end position="69"/>
    </location>
</feature>
<feature type="topological domain" description="Cytoplasmic" evidence="25">
    <location>
        <begin position="70"/>
        <end position="78"/>
    </location>
</feature>
<feature type="transmembrane region" description="Helical; Name=3" evidence="13 27 28">
    <location>
        <begin position="79"/>
        <end position="105"/>
    </location>
</feature>
<feature type="topological domain" description="Extracellular" evidence="25">
    <location>
        <begin position="106"/>
        <end position="118"/>
    </location>
</feature>
<feature type="transmembrane region" description="Helical; Name=4" evidence="13 27 28">
    <location>
        <begin position="119"/>
        <end position="144"/>
    </location>
</feature>
<feature type="topological domain" description="Cytoplasmic" evidence="25">
    <location>
        <begin position="145"/>
        <end position="151"/>
    </location>
</feature>
<feature type="transmembrane region" description="Helical; Name=5" evidence="13 27 28">
    <location>
        <begin position="152"/>
        <end position="179"/>
    </location>
</feature>
<feature type="topological domain" description="Extracellular" evidence="25">
    <location>
        <begin position="180"/>
        <end position="197"/>
    </location>
</feature>
<feature type="transmembrane region" description="Helical; Name=6" evidence="13 27 28">
    <location>
        <begin position="198"/>
        <end position="222"/>
    </location>
</feature>
<feature type="topological domain" description="Cytoplasmic" evidence="25">
    <location>
        <begin position="223"/>
        <end position="286"/>
    </location>
</feature>
<feature type="domain" description="Cytochrome b561" evidence="2">
    <location>
        <begin position="15"/>
        <end position="220"/>
    </location>
</feature>
<feature type="region of interest" description="Disordered" evidence="3">
    <location>
        <begin position="229"/>
        <end position="268"/>
    </location>
</feature>
<feature type="binding site" description="axial binding residue" evidence="13 27 28">
    <location>
        <position position="50"/>
    </location>
    <ligand>
        <name>heme b</name>
        <dbReference type="ChEBI" id="CHEBI:60344"/>
        <label>1</label>
    </ligand>
    <ligandPart>
        <name>Fe</name>
        <dbReference type="ChEBI" id="CHEBI:18248"/>
    </ligandPart>
</feature>
<feature type="binding site" evidence="13 27 28">
    <location>
        <position position="70"/>
    </location>
    <ligand>
        <name>heme b</name>
        <dbReference type="ChEBI" id="CHEBI:60344"/>
        <label>2</label>
    </ligand>
</feature>
<feature type="binding site" evidence="13 27 28">
    <location>
        <position position="79"/>
    </location>
    <ligand>
        <name>heme b</name>
        <dbReference type="ChEBI" id="CHEBI:60344"/>
        <label>2</label>
    </ligand>
</feature>
<feature type="binding site" evidence="13 27 28">
    <location>
        <position position="79"/>
    </location>
    <ligand>
        <name>L-ascorbate</name>
        <dbReference type="ChEBI" id="CHEBI:38290"/>
    </ligand>
</feature>
<feature type="binding site" evidence="13 27 28">
    <location>
        <position position="83"/>
    </location>
    <ligand>
        <name>L-ascorbate</name>
        <dbReference type="ChEBI" id="CHEBI:38290"/>
    </ligand>
</feature>
<feature type="binding site" description="axial binding residue" evidence="13 27 28">
    <location>
        <position position="86"/>
    </location>
    <ligand>
        <name>heme b</name>
        <dbReference type="ChEBI" id="CHEBI:60344"/>
        <label>2</label>
    </ligand>
    <ligandPart>
        <name>Fe</name>
        <dbReference type="ChEBI" id="CHEBI:18248"/>
    </ligandPart>
</feature>
<feature type="binding site" evidence="13 27 28">
    <location>
        <position position="108"/>
    </location>
    <ligand>
        <name>Fe(3+)</name>
        <dbReference type="ChEBI" id="CHEBI:29034"/>
        <note>substrate</note>
    </ligand>
</feature>
<feature type="binding site" evidence="13 27 28">
    <location>
        <begin position="115"/>
        <end position="118"/>
    </location>
    <ligand>
        <name>heme b</name>
        <dbReference type="ChEBI" id="CHEBI:60344"/>
        <label>1</label>
    </ligand>
</feature>
<feature type="binding site" description="axial binding residue" evidence="13 27 28">
    <location>
        <position position="120"/>
    </location>
    <ligand>
        <name>heme b</name>
        <dbReference type="ChEBI" id="CHEBI:60344"/>
        <label>1</label>
    </ligand>
    <ligandPart>
        <name>Fe</name>
        <dbReference type="ChEBI" id="CHEBI:18248"/>
    </ligandPart>
</feature>
<feature type="binding site" evidence="13 27 28">
    <location>
        <position position="152"/>
    </location>
    <ligand>
        <name>L-ascorbate</name>
        <dbReference type="ChEBI" id="CHEBI:38290"/>
    </ligand>
</feature>
<feature type="binding site" description="axial binding residue" evidence="13 27 28">
    <location>
        <position position="159"/>
    </location>
    <ligand>
        <name>heme b</name>
        <dbReference type="ChEBI" id="CHEBI:60344"/>
        <label>2</label>
    </ligand>
    <ligandPart>
        <name>Fe</name>
        <dbReference type="ChEBI" id="CHEBI:18248"/>
    </ligandPart>
</feature>
<feature type="binding site" evidence="13 27 28">
    <location>
        <position position="180"/>
    </location>
    <ligand>
        <name>heme b</name>
        <dbReference type="ChEBI" id="CHEBI:60344"/>
        <label>1</label>
    </ligand>
</feature>
<feature type="binding site" evidence="13 27 28">
    <location>
        <position position="225"/>
    </location>
    <ligand>
        <name>heme b</name>
        <dbReference type="ChEBI" id="CHEBI:60344"/>
        <label>2</label>
    </ligand>
</feature>
<feature type="modified residue" description="Phosphoserine" evidence="32">
    <location>
        <position position="232"/>
    </location>
</feature>
<feature type="modified residue" description="Phosphothreonine" evidence="29 30 31 32">
    <location>
        <position position="285"/>
    </location>
</feature>
<feature type="splice variant" id="VSP_044945" description="In isoform 3." evidence="17">
    <original>MAMEGYWRFLALLGSALLVGFLSVIFALVWVLHYREGLGWDGSALEFNWHPVLMVTGFVFIQGI</original>
    <variation>MLDEGE</variation>
    <location>
        <begin position="1"/>
        <end position="64"/>
    </location>
</feature>
<feature type="splice variant" id="VSP_042039" description="In isoform 2." evidence="17">
    <original>IIVYRLPWTWKCSKLLMKSIHAGLNAVAAILAIISVVAVFENHNVNNIANMYSLHSWVGLIAVICYLLQLLSGFSVFLLPWAPLSLRAFLMPIHVYSGIVIFGTVIATALMGLTEKLIFSLRDPAYSTFPPEGVFVNTLGLLILVFGALIFWIVTRPQWKRPKEPNSTILHPNGGTEQGARGSMPAYSGNNMDKSDSELNSEVAARKRNLALDEAGQRSTM</original>
    <variation>SFRFFSLSASMGSAFSPSISHAHTCLFWNCHLWNSDCNSTYGIDRETDFFPERSCIQYIPARRCFRKYAWPSDPGVRGPHFLDSHQTAMETS</variation>
    <location>
        <begin position="66"/>
        <end position="286"/>
    </location>
</feature>
<feature type="sequence variant" id="VAR_038065" description="In dbSNP:rs16859487." evidence="6">
    <original>M</original>
    <variation>T</variation>
    <location>
        <position position="156"/>
    </location>
</feature>
<feature type="sequence variant" id="VAR_038066" description="In some patients with hereditary hemochromatosis; dbSNP:rs62181680." evidence="7 10">
    <original>R</original>
    <variation>H</variation>
    <location>
        <position position="226"/>
    </location>
</feature>
<feature type="sequence variant" id="VAR_038067" description="In dbSNP:rs10455." evidence="4 8 14 15">
    <original>S</original>
    <variation>N</variation>
    <location>
        <position position="266"/>
    </location>
</feature>
<feature type="mutagenesis site" description="Decreased transmembrane ascorbate ferrireductase activity." evidence="13">
    <original>F</original>
    <variation>L</variation>
    <location>
        <position position="58"/>
    </location>
</feature>
<feature type="mutagenesis site" description="Decreased heme b reduction by ascorbate." evidence="13">
    <original>K</original>
    <variation>S</variation>
    <location>
        <position position="79"/>
    </location>
</feature>
<feature type="mutagenesis site" description="Decreased heme b reduction by ascorbate." evidence="13">
    <original>K</original>
    <variation>S</variation>
    <location>
        <position position="83"/>
    </location>
</feature>
<feature type="mutagenesis site" description="Decreased transmembrane ascorbate ferrireductase activity." evidence="13">
    <original>N</original>
    <variation>A</variation>
    <variation>F</variation>
    <location>
        <position position="107"/>
    </location>
</feature>
<feature type="mutagenesis site" description="Loss of transmembrane ascorbate ferrireductase activity." evidence="13">
    <original>H</original>
    <variation>A</variation>
    <location>
        <position position="108"/>
    </location>
</feature>
<feature type="mutagenesis site" description="Loss of iron binding. Loss of transmembrane ascorbate ferrireductase activity." evidence="13">
    <original>H</original>
    <variation>Q</variation>
    <location>
        <position position="108"/>
    </location>
</feature>
<feature type="mutagenesis site" description="Decreased transmembrane ascorbate ferrireductase activity." evidence="13">
    <original>Y</original>
    <variation>A</variation>
    <variation>S</variation>
    <location>
        <position position="117"/>
    </location>
</feature>
<feature type="mutagenesis site" description="Decreased transmembrane ascorbate ferrireductase activity." evidence="13">
    <original>Y</original>
    <variation>L</variation>
    <location>
        <position position="131"/>
    </location>
</feature>
<feature type="mutagenesis site" description="Decreased heme b reduction by ascorbate." evidence="13">
    <original>R</original>
    <variation>E</variation>
    <location>
        <position position="152"/>
    </location>
</feature>
<feature type="mutagenesis site" description="Decreased transmembrane ascorbate ferrireductase activity." evidence="13">
    <original>F</original>
    <variation>A</variation>
    <location>
        <position position="184"/>
    </location>
</feature>
<feature type="sequence conflict" description="In Ref. 1; CAB66628." evidence="18" ref="1">
    <original>W</original>
    <variation>R</variation>
    <location>
        <position position="7"/>
    </location>
</feature>
<feature type="helix" evidence="33">
    <location>
        <begin position="7"/>
        <end position="33"/>
    </location>
</feature>
<feature type="strand" evidence="33">
    <location>
        <begin position="40"/>
        <end position="43"/>
    </location>
</feature>
<feature type="helix" evidence="33">
    <location>
        <begin position="44"/>
        <end position="47"/>
    </location>
</feature>
<feature type="helix" evidence="33">
    <location>
        <begin position="49"/>
        <end position="57"/>
    </location>
</feature>
<feature type="helix" evidence="33">
    <location>
        <begin position="60"/>
        <end position="66"/>
    </location>
</feature>
<feature type="helix" evidence="33">
    <location>
        <begin position="67"/>
        <end position="70"/>
    </location>
</feature>
<feature type="helix" evidence="33">
    <location>
        <begin position="72"/>
        <end position="74"/>
    </location>
</feature>
<feature type="helix" evidence="33">
    <location>
        <begin position="79"/>
        <end position="111"/>
    </location>
</feature>
<feature type="helix" evidence="33">
    <location>
        <begin position="119"/>
        <end position="142"/>
    </location>
</feature>
<feature type="helix" evidence="33">
    <location>
        <begin position="149"/>
        <end position="185"/>
    </location>
</feature>
<feature type="turn" evidence="33">
    <location>
        <begin position="187"/>
        <end position="190"/>
    </location>
</feature>
<feature type="helix" evidence="33">
    <location>
        <begin position="191"/>
        <end position="193"/>
    </location>
</feature>
<feature type="helix" evidence="33">
    <location>
        <begin position="196"/>
        <end position="219"/>
    </location>
</feature>
<feature type="helix" evidence="33">
    <location>
        <begin position="222"/>
        <end position="224"/>
    </location>
</feature>